<accession>P0C630</accession>
<accession>P52312</accession>
<accession>Q0PA03</accession>
<accession>Q9PP36</accession>
<proteinExistence type="inferred from homology"/>
<organism>
    <name type="scientific">Campylobacter jejuni subsp. jejuni serotype O:2 (strain ATCC 700819 / NCTC 11168)</name>
    <dbReference type="NCBI Taxonomy" id="192222"/>
    <lineage>
        <taxon>Bacteria</taxon>
        <taxon>Pseudomonadati</taxon>
        <taxon>Campylobacterota</taxon>
        <taxon>Epsilonproteobacteria</taxon>
        <taxon>Campylobacterales</taxon>
        <taxon>Campylobacteraceae</taxon>
        <taxon>Campylobacter</taxon>
    </lineage>
</organism>
<feature type="chain" id="PRO_0000088240" description="3-phosphoshikimate 1-carboxyvinyltransferase">
    <location>
        <begin position="1"/>
        <end position="428"/>
    </location>
</feature>
<feature type="active site" description="Proton acceptor" evidence="1">
    <location>
        <position position="313"/>
    </location>
</feature>
<feature type="binding site" evidence="1">
    <location>
        <position position="21"/>
    </location>
    <ligand>
        <name>3-phosphoshikimate</name>
        <dbReference type="ChEBI" id="CHEBI:145989"/>
    </ligand>
</feature>
<feature type="binding site" evidence="1">
    <location>
        <position position="21"/>
    </location>
    <ligand>
        <name>phosphoenolpyruvate</name>
        <dbReference type="ChEBI" id="CHEBI:58702"/>
    </ligand>
</feature>
<feature type="binding site" evidence="1">
    <location>
        <position position="22"/>
    </location>
    <ligand>
        <name>3-phosphoshikimate</name>
        <dbReference type="ChEBI" id="CHEBI:145989"/>
    </ligand>
</feature>
<feature type="binding site" evidence="1">
    <location>
        <position position="26"/>
    </location>
    <ligand>
        <name>3-phosphoshikimate</name>
        <dbReference type="ChEBI" id="CHEBI:145989"/>
    </ligand>
</feature>
<feature type="binding site" evidence="1">
    <location>
        <position position="91"/>
    </location>
    <ligand>
        <name>phosphoenolpyruvate</name>
        <dbReference type="ChEBI" id="CHEBI:58702"/>
    </ligand>
</feature>
<feature type="binding site" evidence="1">
    <location>
        <position position="119"/>
    </location>
    <ligand>
        <name>phosphoenolpyruvate</name>
        <dbReference type="ChEBI" id="CHEBI:58702"/>
    </ligand>
</feature>
<feature type="binding site" evidence="1">
    <location>
        <position position="164"/>
    </location>
    <ligand>
        <name>3-phosphoshikimate</name>
        <dbReference type="ChEBI" id="CHEBI:145989"/>
    </ligand>
</feature>
<feature type="binding site" evidence="1">
    <location>
        <position position="166"/>
    </location>
    <ligand>
        <name>3-phosphoshikimate</name>
        <dbReference type="ChEBI" id="CHEBI:145989"/>
    </ligand>
</feature>
<feature type="binding site" evidence="1">
    <location>
        <position position="166"/>
    </location>
    <ligand>
        <name>phosphoenolpyruvate</name>
        <dbReference type="ChEBI" id="CHEBI:58702"/>
    </ligand>
</feature>
<feature type="binding site" evidence="1">
    <location>
        <position position="313"/>
    </location>
    <ligand>
        <name>3-phosphoshikimate</name>
        <dbReference type="ChEBI" id="CHEBI:145989"/>
    </ligand>
</feature>
<feature type="binding site" evidence="1">
    <location>
        <position position="340"/>
    </location>
    <ligand>
        <name>3-phosphoshikimate</name>
        <dbReference type="ChEBI" id="CHEBI:145989"/>
    </ligand>
</feature>
<feature type="binding site" evidence="1">
    <location>
        <position position="344"/>
    </location>
    <ligand>
        <name>phosphoenolpyruvate</name>
        <dbReference type="ChEBI" id="CHEBI:58702"/>
    </ligand>
</feature>
<feature type="binding site" evidence="1">
    <location>
        <position position="386"/>
    </location>
    <ligand>
        <name>phosphoenolpyruvate</name>
        <dbReference type="ChEBI" id="CHEBI:58702"/>
    </ligand>
</feature>
<dbReference type="EC" id="2.5.1.19" evidence="1"/>
<dbReference type="EMBL" id="AL111168">
    <property type="protein sequence ID" value="CAL35016.1"/>
    <property type="molecule type" value="Genomic_DNA"/>
</dbReference>
<dbReference type="PIR" id="G81362">
    <property type="entry name" value="G81362"/>
</dbReference>
<dbReference type="RefSeq" id="WP_002852577.1">
    <property type="nucleotide sequence ID" value="NZ_SZUC01000001.1"/>
</dbReference>
<dbReference type="RefSeq" id="YP_002344294.1">
    <property type="nucleotide sequence ID" value="NC_002163.1"/>
</dbReference>
<dbReference type="SMR" id="P0C630"/>
<dbReference type="IntAct" id="P0C630">
    <property type="interactions" value="16"/>
</dbReference>
<dbReference type="STRING" id="192222.Cj0895c"/>
<dbReference type="PaxDb" id="192222-Cj0895c"/>
<dbReference type="EnsemblBacteria" id="CAL35016">
    <property type="protein sequence ID" value="CAL35016"/>
    <property type="gene ID" value="Cj0895c"/>
</dbReference>
<dbReference type="GeneID" id="904338"/>
<dbReference type="KEGG" id="cje:Cj0895c"/>
<dbReference type="PATRIC" id="fig|192222.6.peg.879"/>
<dbReference type="eggNOG" id="COG0128">
    <property type="taxonomic scope" value="Bacteria"/>
</dbReference>
<dbReference type="HOGENOM" id="CLU_024321_0_1_7"/>
<dbReference type="OrthoDB" id="9809920at2"/>
<dbReference type="UniPathway" id="UPA00053">
    <property type="reaction ID" value="UER00089"/>
</dbReference>
<dbReference type="Proteomes" id="UP000000799">
    <property type="component" value="Chromosome"/>
</dbReference>
<dbReference type="GO" id="GO:0005737">
    <property type="term" value="C:cytoplasm"/>
    <property type="evidence" value="ECO:0007669"/>
    <property type="project" value="UniProtKB-SubCell"/>
</dbReference>
<dbReference type="GO" id="GO:0003866">
    <property type="term" value="F:3-phosphoshikimate 1-carboxyvinyltransferase activity"/>
    <property type="evidence" value="ECO:0007669"/>
    <property type="project" value="UniProtKB-UniRule"/>
</dbReference>
<dbReference type="GO" id="GO:0008652">
    <property type="term" value="P:amino acid biosynthetic process"/>
    <property type="evidence" value="ECO:0007669"/>
    <property type="project" value="UniProtKB-KW"/>
</dbReference>
<dbReference type="GO" id="GO:0009073">
    <property type="term" value="P:aromatic amino acid family biosynthetic process"/>
    <property type="evidence" value="ECO:0007669"/>
    <property type="project" value="UniProtKB-KW"/>
</dbReference>
<dbReference type="GO" id="GO:0009423">
    <property type="term" value="P:chorismate biosynthetic process"/>
    <property type="evidence" value="ECO:0007669"/>
    <property type="project" value="UniProtKB-UniRule"/>
</dbReference>
<dbReference type="CDD" id="cd01556">
    <property type="entry name" value="EPSP_synthase"/>
    <property type="match status" value="1"/>
</dbReference>
<dbReference type="FunFam" id="3.65.10.10:FF:000005">
    <property type="entry name" value="3-phosphoshikimate 1-carboxyvinyltransferase"/>
    <property type="match status" value="1"/>
</dbReference>
<dbReference type="Gene3D" id="3.65.10.10">
    <property type="entry name" value="Enolpyruvate transferase domain"/>
    <property type="match status" value="2"/>
</dbReference>
<dbReference type="HAMAP" id="MF_00210">
    <property type="entry name" value="EPSP_synth"/>
    <property type="match status" value="1"/>
</dbReference>
<dbReference type="InterPro" id="IPR001986">
    <property type="entry name" value="Enolpyruvate_Tfrase_dom"/>
</dbReference>
<dbReference type="InterPro" id="IPR036968">
    <property type="entry name" value="Enolpyruvate_Tfrase_sf"/>
</dbReference>
<dbReference type="InterPro" id="IPR006264">
    <property type="entry name" value="EPSP_synthase"/>
</dbReference>
<dbReference type="InterPro" id="IPR023193">
    <property type="entry name" value="EPSP_synthase_CS"/>
</dbReference>
<dbReference type="InterPro" id="IPR013792">
    <property type="entry name" value="RNA3'P_cycl/enolpyr_Trfase_a/b"/>
</dbReference>
<dbReference type="NCBIfam" id="TIGR01356">
    <property type="entry name" value="aroA"/>
    <property type="match status" value="1"/>
</dbReference>
<dbReference type="PANTHER" id="PTHR21090">
    <property type="entry name" value="AROM/DEHYDROQUINATE SYNTHASE"/>
    <property type="match status" value="1"/>
</dbReference>
<dbReference type="PANTHER" id="PTHR21090:SF5">
    <property type="entry name" value="PENTAFUNCTIONAL AROM POLYPEPTIDE"/>
    <property type="match status" value="1"/>
</dbReference>
<dbReference type="Pfam" id="PF00275">
    <property type="entry name" value="EPSP_synthase"/>
    <property type="match status" value="1"/>
</dbReference>
<dbReference type="PIRSF" id="PIRSF000505">
    <property type="entry name" value="EPSPS"/>
    <property type="match status" value="1"/>
</dbReference>
<dbReference type="SUPFAM" id="SSF55205">
    <property type="entry name" value="EPT/RTPC-like"/>
    <property type="match status" value="1"/>
</dbReference>
<dbReference type="PROSITE" id="PS00104">
    <property type="entry name" value="EPSP_SYNTHASE_1"/>
    <property type="match status" value="1"/>
</dbReference>
<dbReference type="PROSITE" id="PS00885">
    <property type="entry name" value="EPSP_SYNTHASE_2"/>
    <property type="match status" value="1"/>
</dbReference>
<comment type="function">
    <text evidence="1">Catalyzes the transfer of the enolpyruvyl moiety of phosphoenolpyruvate (PEP) to the 5-hydroxyl of shikimate-3-phosphate (S3P) to produce enolpyruvyl shikimate-3-phosphate and inorganic phosphate.</text>
</comment>
<comment type="catalytic activity">
    <reaction evidence="1">
        <text>3-phosphoshikimate + phosphoenolpyruvate = 5-O-(1-carboxyvinyl)-3-phosphoshikimate + phosphate</text>
        <dbReference type="Rhea" id="RHEA:21256"/>
        <dbReference type="ChEBI" id="CHEBI:43474"/>
        <dbReference type="ChEBI" id="CHEBI:57701"/>
        <dbReference type="ChEBI" id="CHEBI:58702"/>
        <dbReference type="ChEBI" id="CHEBI:145989"/>
        <dbReference type="EC" id="2.5.1.19"/>
    </reaction>
    <physiologicalReaction direction="left-to-right" evidence="1">
        <dbReference type="Rhea" id="RHEA:21257"/>
    </physiologicalReaction>
</comment>
<comment type="pathway">
    <text evidence="1">Metabolic intermediate biosynthesis; chorismate biosynthesis; chorismate from D-erythrose 4-phosphate and phosphoenolpyruvate: step 6/7.</text>
</comment>
<comment type="subunit">
    <text evidence="1">Monomer.</text>
</comment>
<comment type="subcellular location">
    <subcellularLocation>
        <location evidence="1">Cytoplasm</location>
    </subcellularLocation>
</comment>
<comment type="similarity">
    <text evidence="1 2">Belongs to the EPSP synthase family.</text>
</comment>
<reference key="1">
    <citation type="journal article" date="2000" name="Nature">
        <title>The genome sequence of the food-borne pathogen Campylobacter jejuni reveals hypervariable sequences.</title>
        <authorList>
            <person name="Parkhill J."/>
            <person name="Wren B.W."/>
            <person name="Mungall K.L."/>
            <person name="Ketley J.M."/>
            <person name="Churcher C.M."/>
            <person name="Basham D."/>
            <person name="Chillingworth T."/>
            <person name="Davies R.M."/>
            <person name="Feltwell T."/>
            <person name="Holroyd S."/>
            <person name="Jagels K."/>
            <person name="Karlyshev A.V."/>
            <person name="Moule S."/>
            <person name="Pallen M.J."/>
            <person name="Penn C.W."/>
            <person name="Quail M.A."/>
            <person name="Rajandream M.A."/>
            <person name="Rutherford K.M."/>
            <person name="van Vliet A.H.M."/>
            <person name="Whitehead S."/>
            <person name="Barrell B.G."/>
        </authorList>
    </citation>
    <scope>NUCLEOTIDE SEQUENCE [LARGE SCALE GENOMIC DNA]</scope>
    <source>
        <strain>ATCC 700819 / NCTC 11168</strain>
    </source>
</reference>
<evidence type="ECO:0000255" key="1">
    <source>
        <dbReference type="HAMAP-Rule" id="MF_00210"/>
    </source>
</evidence>
<evidence type="ECO:0000305" key="2"/>
<gene>
    <name evidence="1" type="primary">aroA</name>
    <name type="ordered locus">Cj0895c</name>
</gene>
<keyword id="KW-0028">Amino-acid biosynthesis</keyword>
<keyword id="KW-0057">Aromatic amino acid biosynthesis</keyword>
<keyword id="KW-0963">Cytoplasm</keyword>
<keyword id="KW-1185">Reference proteome</keyword>
<keyword id="KW-0808">Transferase</keyword>
<sequence>MKIYKLQTPVNAILENIAADKSISHRFAIFSLLTQEENKAQNYLLAQDTLNTLEIIKNLGAKIEQKDSCVKIIPPKEILSPNCILDCGNSGTAMRLMIGFLAGISGFFVLSGDKYLNNRPMRRISKPLTQIGARIYGRNEANLAPLCIEGQKLKAFNFKSEISSAQVKTAMILSAFRADNVCTFSEISLSRNHSENMLKAMKAPIRVSNDGLSLEINPLKKPLKAQNIIIPNDPSSAFYFVLAAIILPKSQIILKNILLNPTRIEAYKILQKMGAKLEMTITQNDFETIGEIRVESSKLNGIEVKDNIAWLIDEAPALAIAFALAKGKSSLINAKELRVKESDRIAVMVENLKLCGVEARELDDGFEIEGGCELKSSKIKSYGDHRIAMSFAILGLLCGIEIDDSDCIKTSFPNFIEILSNLGARIDY</sequence>
<name>AROA_CAMJE</name>
<protein>
    <recommendedName>
        <fullName evidence="1">3-phosphoshikimate 1-carboxyvinyltransferase</fullName>
        <ecNumber evidence="1">2.5.1.19</ecNumber>
    </recommendedName>
    <alternativeName>
        <fullName evidence="1">5-enolpyruvylshikimate-3-phosphate synthase</fullName>
        <shortName evidence="1">EPSP synthase</shortName>
        <shortName evidence="1">EPSPS</shortName>
    </alternativeName>
</protein>